<dbReference type="EC" id="1.2.7.1"/>
<dbReference type="EMBL" id="X85171">
    <property type="protein sequence ID" value="CAA59457.1"/>
    <property type="status" value="ALT_INIT"/>
    <property type="molecule type" value="Genomic_DNA"/>
</dbReference>
<dbReference type="EMBL" id="AE000512">
    <property type="protein sequence ID" value="AAD35111.1"/>
    <property type="status" value="ALT_INIT"/>
    <property type="molecule type" value="Genomic_DNA"/>
</dbReference>
<dbReference type="PIR" id="D59427">
    <property type="entry name" value="C72427"/>
</dbReference>
<dbReference type="RefSeq" id="NP_227833.1">
    <property type="nucleotide sequence ID" value="NC_000853.1"/>
</dbReference>
<dbReference type="RefSeq" id="WP_004082460.1">
    <property type="nucleotide sequence ID" value="NZ_CP011107.1"/>
</dbReference>
<dbReference type="SMR" id="O05651"/>
<dbReference type="STRING" id="243274.TM_0017"/>
<dbReference type="PaxDb" id="243274-THEMA_04715"/>
<dbReference type="EnsemblBacteria" id="AAD35111">
    <property type="protein sequence ID" value="AAD35111"/>
    <property type="gene ID" value="TM_0017"/>
</dbReference>
<dbReference type="KEGG" id="tma:TM0017"/>
<dbReference type="KEGG" id="tmi:THEMA_04715"/>
<dbReference type="KEGG" id="tmm:Tmari_0014"/>
<dbReference type="KEGG" id="tmw:THMA_0013"/>
<dbReference type="PATRIC" id="fig|243274.5.peg.15"/>
<dbReference type="eggNOG" id="COG0674">
    <property type="taxonomic scope" value="Bacteria"/>
</dbReference>
<dbReference type="InParanoid" id="O05651"/>
<dbReference type="OrthoDB" id="9794954at2"/>
<dbReference type="BioCyc" id="MetaCyc:MONOMER-423"/>
<dbReference type="BRENDA" id="1.2.7.1">
    <property type="organism ID" value="6331"/>
</dbReference>
<dbReference type="Proteomes" id="UP000008183">
    <property type="component" value="Chromosome"/>
</dbReference>
<dbReference type="GO" id="GO:0019164">
    <property type="term" value="F:pyruvate synthase activity"/>
    <property type="evidence" value="ECO:0007669"/>
    <property type="project" value="UniProtKB-EC"/>
</dbReference>
<dbReference type="GO" id="GO:0006979">
    <property type="term" value="P:response to oxidative stress"/>
    <property type="evidence" value="ECO:0000318"/>
    <property type="project" value="GO_Central"/>
</dbReference>
<dbReference type="CDD" id="cd07034">
    <property type="entry name" value="TPP_PYR_PFOR_IOR-alpha_like"/>
    <property type="match status" value="1"/>
</dbReference>
<dbReference type="FunFam" id="3.40.50.920:FF:000010">
    <property type="entry name" value="Pyruvate ferredoxin oxidoreductase, alpha subunit"/>
    <property type="match status" value="1"/>
</dbReference>
<dbReference type="FunFam" id="3.40.50.970:FF:000012">
    <property type="entry name" value="Pyruvate:ferredoxin (Flavodoxin) oxidoreductase"/>
    <property type="match status" value="1"/>
</dbReference>
<dbReference type="Gene3D" id="3.40.50.920">
    <property type="match status" value="1"/>
</dbReference>
<dbReference type="Gene3D" id="3.40.50.970">
    <property type="match status" value="1"/>
</dbReference>
<dbReference type="InterPro" id="IPR033412">
    <property type="entry name" value="PFOR_II"/>
</dbReference>
<dbReference type="InterPro" id="IPR050722">
    <property type="entry name" value="Pyruvate:ferred/Flavod_OxRd"/>
</dbReference>
<dbReference type="InterPro" id="IPR053390">
    <property type="entry name" value="Pyruvate_synthase_PorA"/>
</dbReference>
<dbReference type="InterPro" id="IPR002880">
    <property type="entry name" value="Pyrv_Fd/Flavodoxin_OxRdtase_N"/>
</dbReference>
<dbReference type="InterPro" id="IPR029061">
    <property type="entry name" value="THDP-binding"/>
</dbReference>
<dbReference type="InterPro" id="IPR009014">
    <property type="entry name" value="Transketo_C/PFOR_II"/>
</dbReference>
<dbReference type="NCBIfam" id="NF040682">
    <property type="entry name" value="PorA_Arch"/>
    <property type="match status" value="1"/>
</dbReference>
<dbReference type="PANTHER" id="PTHR32154">
    <property type="entry name" value="PYRUVATE-FLAVODOXIN OXIDOREDUCTASE-RELATED"/>
    <property type="match status" value="1"/>
</dbReference>
<dbReference type="PANTHER" id="PTHR32154:SF0">
    <property type="entry name" value="PYRUVATE-FLAVODOXIN OXIDOREDUCTASE-RELATED"/>
    <property type="match status" value="1"/>
</dbReference>
<dbReference type="Pfam" id="PF17147">
    <property type="entry name" value="PFOR_II"/>
    <property type="match status" value="1"/>
</dbReference>
<dbReference type="Pfam" id="PF01855">
    <property type="entry name" value="POR_N"/>
    <property type="match status" value="1"/>
</dbReference>
<dbReference type="SUPFAM" id="SSF52518">
    <property type="entry name" value="Thiamin diphosphate-binding fold (THDP-binding)"/>
    <property type="match status" value="1"/>
</dbReference>
<dbReference type="SUPFAM" id="SSF52922">
    <property type="entry name" value="TK C-terminal domain-like"/>
    <property type="match status" value="1"/>
</dbReference>
<gene>
    <name type="primary">porA</name>
    <name type="ordered locus">TM_0017</name>
</gene>
<name>PORA_THEMA</name>
<comment type="catalytic activity">
    <reaction>
        <text>2 oxidized [2Fe-2S]-[ferredoxin] + pyruvate + CoA = 2 reduced [2Fe-2S]-[ferredoxin] + acetyl-CoA + CO2 + H(+)</text>
        <dbReference type="Rhea" id="RHEA:12765"/>
        <dbReference type="Rhea" id="RHEA-COMP:10000"/>
        <dbReference type="Rhea" id="RHEA-COMP:10001"/>
        <dbReference type="ChEBI" id="CHEBI:15361"/>
        <dbReference type="ChEBI" id="CHEBI:15378"/>
        <dbReference type="ChEBI" id="CHEBI:16526"/>
        <dbReference type="ChEBI" id="CHEBI:33737"/>
        <dbReference type="ChEBI" id="CHEBI:33738"/>
        <dbReference type="ChEBI" id="CHEBI:57287"/>
        <dbReference type="ChEBI" id="CHEBI:57288"/>
        <dbReference type="EC" id="1.2.7.1"/>
    </reaction>
</comment>
<comment type="subunit">
    <text>Heterotetramer of one alpha, one beta, one delta and one gamma chain.</text>
</comment>
<comment type="sequence caution" evidence="1">
    <conflict type="erroneous initiation">
        <sequence resource="EMBL-CDS" id="AAD35111"/>
    </conflict>
</comment>
<comment type="sequence caution" evidence="1">
    <conflict type="erroneous initiation">
        <sequence resource="EMBL-CDS" id="CAA59457"/>
    </conflict>
</comment>
<accession>O05651</accession>
<sequence length="392" mass="44112">MERVVERVAVTGAEAVANAMRQIEPDVVAAYPITPQTPIVEYFARFVADGVVRTEMIPVESEHSAMSAVVGAAAAGARAMTATSANGLALMHEIVYIAASYRLPIVMPVVNRALSGPINIHCDHSDAMAERDSGWIQLFAETNQEAYDFTILAVRLAEHEDVRLPVMVNLDGFILSHGVEPVEFYPDELVKKFVGELKPMYPLLDTEHPVTWGPLDLYDYYFEHKRQQIEAMENVKKVFPEIAKEFEETFGRKYWFVEPYRMEDAEHVMVALGSTNSTIKYVVDELREEGYKVGSLKIWMFRPFPKEQLQELLNGRKSVVVLDRAVSFGAEAPLYEAVKSALYEVAARPMLGSYVYGLGGRDIKPEHIRKAFEDAINGNLIADEQRYLGLRE</sequence>
<reference key="1">
    <citation type="journal article" date="1996" name="J. Bacteriol.">
        <title>Molecular and phylogenetic characterization of pyruvate and 2-ketoisovalerate ferredoxin oxidoreductases from Pyrococcus furiosus and pyruvate ferredoxin oxidoreductase from Thermotoga maritima.</title>
        <authorList>
            <person name="Kletzin A."/>
            <person name="Adams M.W.W."/>
        </authorList>
    </citation>
    <scope>NUCLEOTIDE SEQUENCE [GENOMIC DNA]</scope>
    <scope>PROTEIN SEQUENCE OF 1-43</scope>
    <source>
        <strain>ATCC 43589 / DSM 3109 / JCM 10099 / NBRC 100826 / MSB8</strain>
    </source>
</reference>
<reference key="2">
    <citation type="journal article" date="1999" name="Nature">
        <title>Evidence for lateral gene transfer between Archaea and Bacteria from genome sequence of Thermotoga maritima.</title>
        <authorList>
            <person name="Nelson K.E."/>
            <person name="Clayton R.A."/>
            <person name="Gill S.R."/>
            <person name="Gwinn M.L."/>
            <person name="Dodson R.J."/>
            <person name="Haft D.H."/>
            <person name="Hickey E.K."/>
            <person name="Peterson J.D."/>
            <person name="Nelson W.C."/>
            <person name="Ketchum K.A."/>
            <person name="McDonald L.A."/>
            <person name="Utterback T.R."/>
            <person name="Malek J.A."/>
            <person name="Linher K.D."/>
            <person name="Garrett M.M."/>
            <person name="Stewart A.M."/>
            <person name="Cotton M.D."/>
            <person name="Pratt M.S."/>
            <person name="Phillips C.A."/>
            <person name="Richardson D.L."/>
            <person name="Heidelberg J.F."/>
            <person name="Sutton G.G."/>
            <person name="Fleischmann R.D."/>
            <person name="Eisen J.A."/>
            <person name="White O."/>
            <person name="Salzberg S.L."/>
            <person name="Smith H.O."/>
            <person name="Venter J.C."/>
            <person name="Fraser C.M."/>
        </authorList>
    </citation>
    <scope>NUCLEOTIDE SEQUENCE [LARGE SCALE GENOMIC DNA]</scope>
    <source>
        <strain>ATCC 43589 / DSM 3109 / JCM 10099 / NBRC 100826 / MSB8</strain>
    </source>
</reference>
<reference key="3">
    <citation type="journal article" date="1994" name="Biochemistry">
        <title>Characterization of an ancestral type of pyruvate ferredoxin oxidoreductase from the hyperthermophilic bacterium, Thermotoga maritima.</title>
        <authorList>
            <person name="Blamey J.M."/>
            <person name="Adams M.W.W."/>
        </authorList>
    </citation>
    <scope>PROTEIN SEQUENCE OF 1-43</scope>
    <scope>CHARACTERIZATION</scope>
    <source>
        <strain>ATCC 43589 / DSM 3109 / JCM 10099 / NBRC 100826 / MSB8</strain>
    </source>
</reference>
<evidence type="ECO:0000305" key="1"/>
<feature type="chain" id="PRO_0000099902" description="Pyruvate synthase subunit PorA">
    <location>
        <begin position="1"/>
        <end position="392"/>
    </location>
</feature>
<organism>
    <name type="scientific">Thermotoga maritima (strain ATCC 43589 / DSM 3109 / JCM 10099 / NBRC 100826 / MSB8)</name>
    <dbReference type="NCBI Taxonomy" id="243274"/>
    <lineage>
        <taxon>Bacteria</taxon>
        <taxon>Thermotogati</taxon>
        <taxon>Thermotogota</taxon>
        <taxon>Thermotogae</taxon>
        <taxon>Thermotogales</taxon>
        <taxon>Thermotogaceae</taxon>
        <taxon>Thermotoga</taxon>
    </lineage>
</organism>
<proteinExistence type="evidence at protein level"/>
<protein>
    <recommendedName>
        <fullName>Pyruvate synthase subunit PorA</fullName>
        <ecNumber>1.2.7.1</ecNumber>
    </recommendedName>
    <alternativeName>
        <fullName>Pyruvate oxidoreductase alpha chain</fullName>
        <shortName>POR</shortName>
    </alternativeName>
    <alternativeName>
        <fullName>Pyruvic-ferredoxin oxidoreductase subunit alpha</fullName>
    </alternativeName>
</protein>
<keyword id="KW-0903">Direct protein sequencing</keyword>
<keyword id="KW-0560">Oxidoreductase</keyword>
<keyword id="KW-1185">Reference proteome</keyword>